<comment type="function">
    <text evidence="3">Metallocarboxypeptidase that mediates deglutamylation of tubulin and non-tubulin target proteins. Catalyzes the removal of polyglutamate side chains present on the gamma-carboxyl group of glutamate residues within the C-terminal tail of tubulin protein. Specifically cleaves tubulin long-side-chains, while it is not able to remove the branching point glutamate. Also catalyzes the removal of polyglutamate residues from the carboxy-terminus of non-tubulin proteins such as MYLK.</text>
</comment>
<comment type="catalytic activity">
    <reaction evidence="3">
        <text>(L-glutamyl)(n+1)-gamma-L-glutamyl-L-glutamyl-[protein] + H2O = (L-glutamyl)(n)-gamma-L-glutamyl-L-glutamyl-[protein] + L-glutamate</text>
        <dbReference type="Rhea" id="RHEA:60004"/>
        <dbReference type="Rhea" id="RHEA-COMP:15519"/>
        <dbReference type="Rhea" id="RHEA-COMP:15675"/>
        <dbReference type="ChEBI" id="CHEBI:15377"/>
        <dbReference type="ChEBI" id="CHEBI:29985"/>
        <dbReference type="ChEBI" id="CHEBI:143623"/>
    </reaction>
    <physiologicalReaction direction="left-to-right" evidence="3">
        <dbReference type="Rhea" id="RHEA:60005"/>
    </physiologicalReaction>
</comment>
<comment type="cofactor">
    <cofactor evidence="1">
        <name>Zn(2+)</name>
        <dbReference type="ChEBI" id="CHEBI:29105"/>
    </cofactor>
    <text evidence="1">Binds 1 zinc ion per subunit.</text>
</comment>
<comment type="activity regulation">
    <text evidence="1">Inhibited by RARRES1.</text>
</comment>
<comment type="subunit">
    <text evidence="2">Interacts with RARRES1, KIF11 and MAPRE1.</text>
</comment>
<comment type="subcellular location">
    <subcellularLocation>
        <location evidence="3">Cytoplasm</location>
        <location evidence="3">Cytosol</location>
    </subcellularLocation>
    <subcellularLocation>
        <location evidence="2">Cytoplasm</location>
        <location evidence="2">Cytoskeleton</location>
        <location evidence="2">Microtubule organizing center</location>
        <location evidence="2">Centrosome</location>
        <location evidence="2">Centriole</location>
    </subcellularLocation>
    <subcellularLocation>
        <location evidence="2">Cytoplasm</location>
        <location evidence="2">Cytoskeleton</location>
        <location evidence="2">Cilium basal body</location>
    </subcellularLocation>
    <text evidence="2">Colocalizes with gamma-tubulin in the centrioles and with glutamylated tubulin in the basal bodies of ciliated cells.</text>
</comment>
<comment type="similarity">
    <text evidence="6">Belongs to the peptidase M14 family.</text>
</comment>
<comment type="caution">
    <text evidence="2 3">Was initially shown to catalyze the removal of carboxy-terminus tyrosine from alpha-tubulin (By similarity). However, later studies did not identified any detyrosinase or deglycylase activities from the carboxy-terminus of tubulin (By similarity).</text>
</comment>
<comment type="caution">
    <text evidence="2">Was originally thought to have detyrosinating activity from C-terminal positions on tubulin.</text>
</comment>
<name>CBPC2_MACFA</name>
<dbReference type="EC" id="3.4.17.-" evidence="3"/>
<dbReference type="EMBL" id="AB169358">
    <property type="protein sequence ID" value="BAE01443.1"/>
    <property type="molecule type" value="mRNA"/>
</dbReference>
<dbReference type="RefSeq" id="NP_001306283.1">
    <property type="nucleotide sequence ID" value="NM_001319354.1"/>
</dbReference>
<dbReference type="SMR" id="Q4R632"/>
<dbReference type="STRING" id="9541.ENSMFAP00000023579"/>
<dbReference type="MEROPS" id="M14.029"/>
<dbReference type="eggNOG" id="KOG3641">
    <property type="taxonomic scope" value="Eukaryota"/>
</dbReference>
<dbReference type="Proteomes" id="UP000233100">
    <property type="component" value="Unplaced"/>
</dbReference>
<dbReference type="GO" id="GO:0005814">
    <property type="term" value="C:centriole"/>
    <property type="evidence" value="ECO:0000250"/>
    <property type="project" value="UniProtKB"/>
</dbReference>
<dbReference type="GO" id="GO:0036064">
    <property type="term" value="C:ciliary basal body"/>
    <property type="evidence" value="ECO:0000250"/>
    <property type="project" value="UniProtKB"/>
</dbReference>
<dbReference type="GO" id="GO:0005829">
    <property type="term" value="C:cytosol"/>
    <property type="evidence" value="ECO:0000250"/>
    <property type="project" value="UniProtKB"/>
</dbReference>
<dbReference type="GO" id="GO:0004181">
    <property type="term" value="F:metallocarboxypeptidase activity"/>
    <property type="evidence" value="ECO:0000250"/>
    <property type="project" value="UniProtKB"/>
</dbReference>
<dbReference type="GO" id="GO:0008270">
    <property type="term" value="F:zinc ion binding"/>
    <property type="evidence" value="ECO:0007669"/>
    <property type="project" value="InterPro"/>
</dbReference>
<dbReference type="GO" id="GO:0035610">
    <property type="term" value="P:protein side chain deglutamylation"/>
    <property type="evidence" value="ECO:0000250"/>
    <property type="project" value="UniProtKB"/>
</dbReference>
<dbReference type="GO" id="GO:0006508">
    <property type="term" value="P:proteolysis"/>
    <property type="evidence" value="ECO:0007669"/>
    <property type="project" value="UniProtKB-KW"/>
</dbReference>
<dbReference type="CDD" id="cd06907">
    <property type="entry name" value="M14_AGBL2-3_like"/>
    <property type="match status" value="1"/>
</dbReference>
<dbReference type="FunFam" id="2.60.40.3120:FF:000001">
    <property type="entry name" value="cytosolic carboxypeptidase 1 isoform X1"/>
    <property type="match status" value="1"/>
</dbReference>
<dbReference type="FunFam" id="3.40.630.10:FF:000011">
    <property type="entry name" value="cytosolic carboxypeptidase 2 isoform X1"/>
    <property type="match status" value="1"/>
</dbReference>
<dbReference type="Gene3D" id="2.60.40.3120">
    <property type="match status" value="1"/>
</dbReference>
<dbReference type="Gene3D" id="3.40.630.10">
    <property type="entry name" value="Zn peptidases"/>
    <property type="match status" value="1"/>
</dbReference>
<dbReference type="InterPro" id="IPR050821">
    <property type="entry name" value="Cytosolic_carboxypeptidase"/>
</dbReference>
<dbReference type="InterPro" id="IPR040626">
    <property type="entry name" value="Pepdidase_M14_N"/>
</dbReference>
<dbReference type="InterPro" id="IPR000834">
    <property type="entry name" value="Peptidase_M14"/>
</dbReference>
<dbReference type="PANTHER" id="PTHR12756">
    <property type="entry name" value="CYTOSOLIC CARBOXYPEPTIDASE"/>
    <property type="match status" value="1"/>
</dbReference>
<dbReference type="PANTHER" id="PTHR12756:SF41">
    <property type="entry name" value="CYTOSOLIC CARBOXYPEPTIDASE 2"/>
    <property type="match status" value="1"/>
</dbReference>
<dbReference type="Pfam" id="PF18027">
    <property type="entry name" value="Pepdidase_M14_N"/>
    <property type="match status" value="1"/>
</dbReference>
<dbReference type="Pfam" id="PF00246">
    <property type="entry name" value="Peptidase_M14"/>
    <property type="match status" value="1"/>
</dbReference>
<dbReference type="SUPFAM" id="SSF53187">
    <property type="entry name" value="Zn-dependent exopeptidases"/>
    <property type="match status" value="1"/>
</dbReference>
<dbReference type="PROSITE" id="PS52035">
    <property type="entry name" value="PEPTIDASE_M14"/>
    <property type="match status" value="1"/>
</dbReference>
<accession>Q4R632</accession>
<sequence length="840" mass="97606">MFPALETHLKQTIPDPYEDFMYRHLQYYGYFKAQRGSLPNSATHQHVRKNNPQYLLHGSLGGKDDLIPDTLQKEKLLWPTSLSSAVHRQIEAINRDSHMLSLPHLRSRQLLYDELDEVNPRLREPQELFSILSTKRPLLAPRWPIECEVIKESIHHIEWAPPQPEYFYQPKGNEKVPEIVGEKKGTVVYQLDSVPTEGSYFTSSRVGGKQGIIKELAVTLQGPEDNTLLFESRFECGNLQKAVRVDTYEYELTLRTDLYTNRHTQWFYFRVQNTRKDATYRFTIVNLLKPKSLYTVGMKPLLYSQMDANTRNIGWRREGNEIKYCKNNMDDGQQPFYCLTWTIQFPYDQDTCFFAHFYPYTYTDLQCYLLSVANNPIQSQFCKLQTLCRSLAGNTVYLLTITNPSQTPQEAAAKKAVVLSARVHPGESNGSWVMKGFLDFILSNSPDAQLLRDIFVFKVLPMLNPDGVIVGNYRCSLAGRDLNRHYKTILKESFPCIWYTRNMIKRLLEEREVLLYCDFHGHSRKNNTFLYGCNNNNRKYWLHERVFPLMLSKNAPDRFSFHSCNFKVQKCKEGTGRVVMWRMGILNSYTMESTFGGSTLGSKRDTHFTIEDLKSLGYHVCDTLLDFCDPDQTKFTQCLAELKELLRQEIHKKFHELGQDVDLEESWSDISLSDIESSTSGSDSSLSDGLPVHLANIADELTQKKMFKKKKKKSLQTRKQRNEQYQKKNLMWKLKLTEDTSEFASTLQKHPAFFKNSESSSFLPMRNENPRLNETNLNRRDKDTSLDPSMTTLILPKNKGRMQTNLNRRDKDTSLDPSMTTLILPKNKGRMQVLHLIYCI</sequence>
<organism>
    <name type="scientific">Macaca fascicularis</name>
    <name type="common">Crab-eating macaque</name>
    <name type="synonym">Cynomolgus monkey</name>
    <dbReference type="NCBI Taxonomy" id="9541"/>
    <lineage>
        <taxon>Eukaryota</taxon>
        <taxon>Metazoa</taxon>
        <taxon>Chordata</taxon>
        <taxon>Craniata</taxon>
        <taxon>Vertebrata</taxon>
        <taxon>Euteleostomi</taxon>
        <taxon>Mammalia</taxon>
        <taxon>Eutheria</taxon>
        <taxon>Euarchontoglires</taxon>
        <taxon>Primates</taxon>
        <taxon>Haplorrhini</taxon>
        <taxon>Catarrhini</taxon>
        <taxon>Cercopithecidae</taxon>
        <taxon>Cercopithecinae</taxon>
        <taxon>Macaca</taxon>
    </lineage>
</organism>
<reference key="1">
    <citation type="submission" date="2005-06" db="EMBL/GenBank/DDBJ databases">
        <title>DNA sequences of macaque genes expressed in brain or testis and its evolutionary implications.</title>
        <authorList>
            <consortium name="International consortium for macaque cDNA sequencing and analysis"/>
        </authorList>
    </citation>
    <scope>NUCLEOTIDE SEQUENCE [LARGE SCALE MRNA]</scope>
    <source>
        <tissue>Testis</tissue>
    </source>
</reference>
<protein>
    <recommendedName>
        <fullName evidence="3">Cytosolic carboxypeptidase 2</fullName>
        <ecNumber evidence="3">3.4.17.-</ecNumber>
    </recommendedName>
    <alternativeName>
        <fullName>ATP/GTP-binding protein-like 2</fullName>
    </alternativeName>
    <alternativeName>
        <fullName evidence="6">Protein deglutamylase CCP2</fullName>
    </alternativeName>
</protein>
<gene>
    <name type="primary">AGBL2</name>
    <name evidence="3" type="synonym">CCP2</name>
    <name type="ORF">QtsA-19251</name>
</gene>
<keyword id="KW-0121">Carboxypeptidase</keyword>
<keyword id="KW-0966">Cell projection</keyword>
<keyword id="KW-0963">Cytoplasm</keyword>
<keyword id="KW-0206">Cytoskeleton</keyword>
<keyword id="KW-0378">Hydrolase</keyword>
<keyword id="KW-0479">Metal-binding</keyword>
<keyword id="KW-0482">Metalloprotease</keyword>
<keyword id="KW-0645">Protease</keyword>
<keyword id="KW-1185">Reference proteome</keyword>
<keyword id="KW-0862">Zinc</keyword>
<feature type="chain" id="PRO_0000283749" description="Cytosolic carboxypeptidase 2">
    <location>
        <begin position="1"/>
        <end position="840"/>
    </location>
</feature>
<feature type="domain" description="Peptidase M14" evidence="4">
    <location>
        <begin position="358"/>
        <end position="628"/>
    </location>
</feature>
<feature type="region of interest" description="Disordered" evidence="5">
    <location>
        <begin position="706"/>
        <end position="726"/>
    </location>
</feature>
<feature type="region of interest" description="Disordered" evidence="5">
    <location>
        <begin position="758"/>
        <end position="789"/>
    </location>
</feature>
<feature type="compositionally biased region" description="Basic residues" evidence="5">
    <location>
        <begin position="706"/>
        <end position="719"/>
    </location>
</feature>
<feature type="active site" description="Proton donor/acceptor" evidence="4">
    <location>
        <position position="592"/>
    </location>
</feature>
<feature type="binding site" evidence="4">
    <location>
        <position position="424"/>
    </location>
    <ligand>
        <name>Zn(2+)</name>
        <dbReference type="ChEBI" id="CHEBI:29105"/>
        <note>catalytic</note>
    </ligand>
</feature>
<feature type="binding site" evidence="4">
    <location>
        <position position="427"/>
    </location>
    <ligand>
        <name>Zn(2+)</name>
        <dbReference type="ChEBI" id="CHEBI:29105"/>
        <note>catalytic</note>
    </ligand>
</feature>
<feature type="binding site" evidence="4">
    <location>
        <position position="520"/>
    </location>
    <ligand>
        <name>Zn(2+)</name>
        <dbReference type="ChEBI" id="CHEBI:29105"/>
        <note>catalytic</note>
    </ligand>
</feature>
<proteinExistence type="evidence at transcript level"/>
<evidence type="ECO:0000250" key="1"/>
<evidence type="ECO:0000250" key="2">
    <source>
        <dbReference type="UniProtKB" id="Q5U5Z8"/>
    </source>
</evidence>
<evidence type="ECO:0000250" key="3">
    <source>
        <dbReference type="UniProtKB" id="Q8CDK2"/>
    </source>
</evidence>
<evidence type="ECO:0000255" key="4">
    <source>
        <dbReference type="PROSITE-ProRule" id="PRU01379"/>
    </source>
</evidence>
<evidence type="ECO:0000256" key="5">
    <source>
        <dbReference type="SAM" id="MobiDB-lite"/>
    </source>
</evidence>
<evidence type="ECO:0000305" key="6"/>